<organism>
    <name type="scientific">Pongo abelii</name>
    <name type="common">Sumatran orangutan</name>
    <name type="synonym">Pongo pygmaeus abelii</name>
    <dbReference type="NCBI Taxonomy" id="9601"/>
    <lineage>
        <taxon>Eukaryota</taxon>
        <taxon>Metazoa</taxon>
        <taxon>Chordata</taxon>
        <taxon>Craniata</taxon>
        <taxon>Vertebrata</taxon>
        <taxon>Euteleostomi</taxon>
        <taxon>Mammalia</taxon>
        <taxon>Eutheria</taxon>
        <taxon>Euarchontoglires</taxon>
        <taxon>Primates</taxon>
        <taxon>Haplorrhini</taxon>
        <taxon>Catarrhini</taxon>
        <taxon>Hominidae</taxon>
        <taxon>Pongo</taxon>
    </lineage>
</organism>
<evidence type="ECO:0000250" key="1">
    <source>
        <dbReference type="UniProtKB" id="P97454"/>
    </source>
</evidence>
<evidence type="ECO:0000250" key="2">
    <source>
        <dbReference type="UniProtKB" id="Q99717"/>
    </source>
</evidence>
<evidence type="ECO:0000255" key="3">
    <source>
        <dbReference type="PROSITE-ProRule" id="PRU00438"/>
    </source>
</evidence>
<evidence type="ECO:0000255" key="4">
    <source>
        <dbReference type="PROSITE-ProRule" id="PRU00439"/>
    </source>
</evidence>
<evidence type="ECO:0000256" key="5">
    <source>
        <dbReference type="SAM" id="MobiDB-lite"/>
    </source>
</evidence>
<evidence type="ECO:0000305" key="6"/>
<name>SMAD5_PONAB</name>
<accession>Q5R6H7</accession>
<reference key="1">
    <citation type="submission" date="2004-11" db="EMBL/GenBank/DDBJ databases">
        <authorList>
            <consortium name="The German cDNA consortium"/>
        </authorList>
    </citation>
    <scope>NUCLEOTIDE SEQUENCE [LARGE SCALE MRNA]</scope>
    <source>
        <tissue>Heart</tissue>
    </source>
</reference>
<sequence length="465" mass="52258">MTSMASLFSFTSPAVKRLLGWKQGDEEEKWAEKAVDALVKKLKKKKGAMEELEKALSSPGQPSKCVTIPRSLDGRLQVSHRKGLPHVIYCRVWRWPDLQSHHELKPLDICEFPFGSKQKEVCINPYHYKRVESPVLPPVLVPRHNEFNPQHSLLVQFRNLSHNEPHMPQNATFPDSFHQPNNTPFPLSPNSPYPPSPASSTYPNSPASSGPGSPFQLPADTPPPAYMPPDDQMGQDNSQPMDTSNNMIPQIMPSISSRDVQPVAYEEPKHWCSIVYYELNNRVGEAFHASSTSVLVDGFTDPSNNKSRFCLGLLSNVNRNSTIENTRRHIGKGVHLYYVGGEVYAECLSDSSIFVQSRNCNFHHGFHPTTVCKIPSSCSLKIFNNQEFAQLLAQSVNHGFEAVYELTKMCTIRMSFVKGWGAEYHRQDVTSTPCWIEIHLHGPLQWLDKVLTQMGSPLNPISSVS</sequence>
<dbReference type="EMBL" id="CR860512">
    <property type="protein sequence ID" value="CAH92639.1"/>
    <property type="molecule type" value="mRNA"/>
</dbReference>
<dbReference type="RefSeq" id="NP_001126544.1">
    <property type="nucleotide sequence ID" value="NM_001133072.1"/>
</dbReference>
<dbReference type="RefSeq" id="XP_009239348.1">
    <property type="nucleotide sequence ID" value="XM_009241073.4"/>
</dbReference>
<dbReference type="RefSeq" id="XP_009239349.1">
    <property type="nucleotide sequence ID" value="XM_009241074.1"/>
</dbReference>
<dbReference type="RefSeq" id="XP_054411107.1">
    <property type="nucleotide sequence ID" value="XM_054555132.2"/>
</dbReference>
<dbReference type="RefSeq" id="XP_054411108.1">
    <property type="nucleotide sequence ID" value="XM_054555133.2"/>
</dbReference>
<dbReference type="SMR" id="Q5R6H7"/>
<dbReference type="FunCoup" id="Q5R6H7">
    <property type="interactions" value="3693"/>
</dbReference>
<dbReference type="STRING" id="9601.ENSPPYP00000017676"/>
<dbReference type="Ensembl" id="ENSPPYT00000054490.1">
    <property type="protein sequence ID" value="ENSPPYP00000040968.1"/>
    <property type="gene ID" value="ENSPPYG00000015808.3"/>
</dbReference>
<dbReference type="GeneID" id="100173534"/>
<dbReference type="KEGG" id="pon:100173534"/>
<dbReference type="CTD" id="4090"/>
<dbReference type="eggNOG" id="KOG3701">
    <property type="taxonomic scope" value="Eukaryota"/>
</dbReference>
<dbReference type="GeneTree" id="ENSGT00940000155437"/>
<dbReference type="HOGENOM" id="CLU_026736_0_2_1"/>
<dbReference type="InParanoid" id="Q5R6H7"/>
<dbReference type="OMA" id="QPMDTGN"/>
<dbReference type="OrthoDB" id="5794312at2759"/>
<dbReference type="TreeFam" id="TF314923"/>
<dbReference type="Proteomes" id="UP000001595">
    <property type="component" value="Chromosome 5"/>
</dbReference>
<dbReference type="GO" id="GO:0005829">
    <property type="term" value="C:cytosol"/>
    <property type="evidence" value="ECO:0007669"/>
    <property type="project" value="Ensembl"/>
</dbReference>
<dbReference type="GO" id="GO:0071144">
    <property type="term" value="C:heteromeric SMAD protein complex"/>
    <property type="evidence" value="ECO:0007669"/>
    <property type="project" value="TreeGrafter"/>
</dbReference>
<dbReference type="GO" id="GO:0005739">
    <property type="term" value="C:mitochondrion"/>
    <property type="evidence" value="ECO:0007669"/>
    <property type="project" value="UniProtKB-SubCell"/>
</dbReference>
<dbReference type="GO" id="GO:0005654">
    <property type="term" value="C:nucleoplasm"/>
    <property type="evidence" value="ECO:0007669"/>
    <property type="project" value="Ensembl"/>
</dbReference>
<dbReference type="GO" id="GO:0017151">
    <property type="term" value="F:DEAD/H-box RNA helicase binding"/>
    <property type="evidence" value="ECO:0007669"/>
    <property type="project" value="Ensembl"/>
</dbReference>
<dbReference type="GO" id="GO:0001227">
    <property type="term" value="F:DNA-binding transcription repressor activity, RNA polymerase II-specific"/>
    <property type="evidence" value="ECO:0007669"/>
    <property type="project" value="Ensembl"/>
</dbReference>
<dbReference type="GO" id="GO:0070411">
    <property type="term" value="F:I-SMAD binding"/>
    <property type="evidence" value="ECO:0007669"/>
    <property type="project" value="TreeGrafter"/>
</dbReference>
<dbReference type="GO" id="GO:0046872">
    <property type="term" value="F:metal ion binding"/>
    <property type="evidence" value="ECO:0007669"/>
    <property type="project" value="UniProtKB-KW"/>
</dbReference>
<dbReference type="GO" id="GO:0000978">
    <property type="term" value="F:RNA polymerase II cis-regulatory region sequence-specific DNA binding"/>
    <property type="evidence" value="ECO:0007669"/>
    <property type="project" value="Ensembl"/>
</dbReference>
<dbReference type="GO" id="GO:0031625">
    <property type="term" value="F:ubiquitin protein ligase binding"/>
    <property type="evidence" value="ECO:0007669"/>
    <property type="project" value="Ensembl"/>
</dbReference>
<dbReference type="GO" id="GO:0009653">
    <property type="term" value="P:anatomical structure morphogenesis"/>
    <property type="evidence" value="ECO:0007669"/>
    <property type="project" value="TreeGrafter"/>
</dbReference>
<dbReference type="GO" id="GO:0030509">
    <property type="term" value="P:BMP signaling pathway"/>
    <property type="evidence" value="ECO:0000250"/>
    <property type="project" value="UniProtKB"/>
</dbReference>
<dbReference type="GO" id="GO:0060348">
    <property type="term" value="P:bone development"/>
    <property type="evidence" value="ECO:0007669"/>
    <property type="project" value="Ensembl"/>
</dbReference>
<dbReference type="GO" id="GO:0060048">
    <property type="term" value="P:cardiac muscle contraction"/>
    <property type="evidence" value="ECO:0007669"/>
    <property type="project" value="Ensembl"/>
</dbReference>
<dbReference type="GO" id="GO:0051216">
    <property type="term" value="P:cartilage development"/>
    <property type="evidence" value="ECO:0007669"/>
    <property type="project" value="Ensembl"/>
</dbReference>
<dbReference type="GO" id="GO:0009880">
    <property type="term" value="P:embryonic pattern specification"/>
    <property type="evidence" value="ECO:0000250"/>
    <property type="project" value="UniProtKB"/>
</dbReference>
<dbReference type="GO" id="GO:0030218">
    <property type="term" value="P:erythrocyte differentiation"/>
    <property type="evidence" value="ECO:0007669"/>
    <property type="project" value="Ensembl"/>
</dbReference>
<dbReference type="GO" id="GO:0007281">
    <property type="term" value="P:germ cell development"/>
    <property type="evidence" value="ECO:0007669"/>
    <property type="project" value="Ensembl"/>
</dbReference>
<dbReference type="GO" id="GO:0006879">
    <property type="term" value="P:intracellular iron ion homeostasis"/>
    <property type="evidence" value="ECO:0007669"/>
    <property type="project" value="Ensembl"/>
</dbReference>
<dbReference type="GO" id="GO:0043066">
    <property type="term" value="P:negative regulation of apoptotic process"/>
    <property type="evidence" value="ECO:0007669"/>
    <property type="project" value="Ensembl"/>
</dbReference>
<dbReference type="GO" id="GO:1902045">
    <property type="term" value="P:negative regulation of Fas signaling pathway"/>
    <property type="evidence" value="ECO:0007669"/>
    <property type="project" value="Ensembl"/>
</dbReference>
<dbReference type="GO" id="GO:0010629">
    <property type="term" value="P:negative regulation of gene expression"/>
    <property type="evidence" value="ECO:0007669"/>
    <property type="project" value="Ensembl"/>
</dbReference>
<dbReference type="GO" id="GO:0002051">
    <property type="term" value="P:osteoblast fate commitment"/>
    <property type="evidence" value="ECO:0007669"/>
    <property type="project" value="Ensembl"/>
</dbReference>
<dbReference type="GO" id="GO:0045669">
    <property type="term" value="P:positive regulation of osteoblast differentiation"/>
    <property type="evidence" value="ECO:0007669"/>
    <property type="project" value="Ensembl"/>
</dbReference>
<dbReference type="GO" id="GO:0045944">
    <property type="term" value="P:positive regulation of transcription by RNA polymerase II"/>
    <property type="evidence" value="ECO:0007669"/>
    <property type="project" value="Ensembl"/>
</dbReference>
<dbReference type="GO" id="GO:0060395">
    <property type="term" value="P:SMAD protein signal transduction"/>
    <property type="evidence" value="ECO:0007669"/>
    <property type="project" value="Ensembl"/>
</dbReference>
<dbReference type="GO" id="GO:0048863">
    <property type="term" value="P:stem cell differentiation"/>
    <property type="evidence" value="ECO:0007669"/>
    <property type="project" value="Ensembl"/>
</dbReference>
<dbReference type="GO" id="GO:0007179">
    <property type="term" value="P:transforming growth factor beta receptor signaling pathway"/>
    <property type="evidence" value="ECO:0007669"/>
    <property type="project" value="Ensembl"/>
</dbReference>
<dbReference type="GO" id="GO:0001657">
    <property type="term" value="P:ureteric bud development"/>
    <property type="evidence" value="ECO:0007669"/>
    <property type="project" value="Ensembl"/>
</dbReference>
<dbReference type="CDD" id="cd10490">
    <property type="entry name" value="MH1_SMAD_1_5_9"/>
    <property type="match status" value="1"/>
</dbReference>
<dbReference type="CDD" id="cd10497">
    <property type="entry name" value="MH2_SMAD_1_5_9"/>
    <property type="match status" value="1"/>
</dbReference>
<dbReference type="FunFam" id="2.60.200.10:FF:000001">
    <property type="entry name" value="Mothers against decapentaplegic homolog"/>
    <property type="match status" value="1"/>
</dbReference>
<dbReference type="FunFam" id="3.90.520.10:FF:000001">
    <property type="entry name" value="Mothers against decapentaplegic homolog"/>
    <property type="match status" value="1"/>
</dbReference>
<dbReference type="Gene3D" id="2.60.200.10">
    <property type="match status" value="1"/>
</dbReference>
<dbReference type="Gene3D" id="3.90.520.10">
    <property type="entry name" value="SMAD MH1 domain"/>
    <property type="match status" value="1"/>
</dbReference>
<dbReference type="InterPro" id="IPR013790">
    <property type="entry name" value="Dwarfin"/>
</dbReference>
<dbReference type="InterPro" id="IPR003619">
    <property type="entry name" value="MAD_homology1_Dwarfin-type"/>
</dbReference>
<dbReference type="InterPro" id="IPR013019">
    <property type="entry name" value="MAD_homology_MH1"/>
</dbReference>
<dbReference type="InterPro" id="IPR017855">
    <property type="entry name" value="SMAD-like_dom_sf"/>
</dbReference>
<dbReference type="InterPro" id="IPR001132">
    <property type="entry name" value="SMAD_dom_Dwarfin-type"/>
</dbReference>
<dbReference type="InterPro" id="IPR008984">
    <property type="entry name" value="SMAD_FHA_dom_sf"/>
</dbReference>
<dbReference type="InterPro" id="IPR036578">
    <property type="entry name" value="SMAD_MH1_sf"/>
</dbReference>
<dbReference type="PANTHER" id="PTHR13703:SF36">
    <property type="entry name" value="MOTHERS AGAINST DECAPENTAPLEGIC HOMOLOG 5"/>
    <property type="match status" value="1"/>
</dbReference>
<dbReference type="PANTHER" id="PTHR13703">
    <property type="entry name" value="SMAD"/>
    <property type="match status" value="1"/>
</dbReference>
<dbReference type="Pfam" id="PF03165">
    <property type="entry name" value="MH1"/>
    <property type="match status" value="1"/>
</dbReference>
<dbReference type="Pfam" id="PF03166">
    <property type="entry name" value="MH2"/>
    <property type="match status" value="1"/>
</dbReference>
<dbReference type="SMART" id="SM00523">
    <property type="entry name" value="DWA"/>
    <property type="match status" value="1"/>
</dbReference>
<dbReference type="SMART" id="SM00524">
    <property type="entry name" value="DWB"/>
    <property type="match status" value="1"/>
</dbReference>
<dbReference type="SUPFAM" id="SSF56366">
    <property type="entry name" value="SMAD MH1 domain"/>
    <property type="match status" value="1"/>
</dbReference>
<dbReference type="SUPFAM" id="SSF49879">
    <property type="entry name" value="SMAD/FHA domain"/>
    <property type="match status" value="1"/>
</dbReference>
<dbReference type="PROSITE" id="PS51075">
    <property type="entry name" value="MH1"/>
    <property type="match status" value="1"/>
</dbReference>
<dbReference type="PROSITE" id="PS51076">
    <property type="entry name" value="MH2"/>
    <property type="match status" value="1"/>
</dbReference>
<gene>
    <name type="primary">SMAD5</name>
    <name type="synonym">MADH5</name>
</gene>
<comment type="function">
    <text evidence="2">Transcriptional regulator that plays a role in various cellular processes including embryonic development, cell differentiation, angiogenesis and tissue homeostasis. Upon BMP ligand binding to their receptors at the cell surface, is phosphorylated by activated type I BMP receptors (BMPRIs) and associates with SMAD4 to form a heteromeric complex which translocates into the nucleus acting as transcription factor. In turn, the hetero-trimeric complex recognizes cis-regulatory elements containing Smad Binding Elements (SBEs) to modulate the outcome of the signaling network. Non-phosphorylated SMAD5 has a cytoplasmic role in energy metabolism regulation by promoting mitochondrial respiration and glycolysis in response to cytoplasmic pH changes. Mechanistically, interacts with hexokinase 1/HK1 and thereby accelerates glycolysis.</text>
</comment>
<comment type="subunit">
    <text evidence="1 2">Homodimer. Forms trimers with the co-SMAD SMAD4 (By similarity). Interacts with PEBP2-alpha subunit and SMURF1. Interacts with SUV39H1 and SUV39H2. Interacts (via MH2 domain) with LEMD3. Interacts with WWP1. Interacts with TMEM119 (By similarity). Interacts with ZNF8. Interacts with RANBP3L. Interacts with HK1. Interacts with HGS; this interaction attenuates BMP signaling (By similarity).</text>
</comment>
<comment type="subcellular location">
    <subcellularLocation>
        <location evidence="2">Cytoplasm</location>
    </subcellularLocation>
    <subcellularLocation>
        <location evidence="2">Nucleus</location>
    </subcellularLocation>
    <subcellularLocation>
        <location evidence="2">Mitochondrion</location>
    </subcellularLocation>
    <text evidence="2">Cytoplasmic in the absence of ligand. Migrates to the nucleus when complexed with SMAD4.</text>
</comment>
<comment type="PTM">
    <text evidence="2">Phosphorylated on serine by BMP (bone morphogenetic proteins) type 1 receptor kinase.</text>
</comment>
<comment type="PTM">
    <text evidence="2">Ubiquitin-mediated proteolysis by SMAD-specific E3 ubiquitin ligase SMURF1.</text>
</comment>
<comment type="similarity">
    <text evidence="6">Belongs to the dwarfin/SMAD family.</text>
</comment>
<keyword id="KW-0007">Acetylation</keyword>
<keyword id="KW-0963">Cytoplasm</keyword>
<keyword id="KW-0238">DNA-binding</keyword>
<keyword id="KW-0479">Metal-binding</keyword>
<keyword id="KW-0496">Mitochondrion</keyword>
<keyword id="KW-0539">Nucleus</keyword>
<keyword id="KW-0597">Phosphoprotein</keyword>
<keyword id="KW-1185">Reference proteome</keyword>
<keyword id="KW-0804">Transcription</keyword>
<keyword id="KW-0805">Transcription regulation</keyword>
<keyword id="KW-0862">Zinc</keyword>
<feature type="initiator methionine" description="Removed" evidence="2">
    <location>
        <position position="1"/>
    </location>
</feature>
<feature type="chain" id="PRO_0000291876" description="Mothers against decapentaplegic homolog 5">
    <location>
        <begin position="2"/>
        <end position="465"/>
    </location>
</feature>
<feature type="domain" description="MH1" evidence="3">
    <location>
        <begin position="13"/>
        <end position="137"/>
    </location>
</feature>
<feature type="domain" description="MH2" evidence="4">
    <location>
        <begin position="271"/>
        <end position="465"/>
    </location>
</feature>
<feature type="region of interest" description="Disordered" evidence="5">
    <location>
        <begin position="163"/>
        <end position="249"/>
    </location>
</feature>
<feature type="compositionally biased region" description="Polar residues" evidence="5">
    <location>
        <begin position="169"/>
        <end position="182"/>
    </location>
</feature>
<feature type="compositionally biased region" description="Pro residues" evidence="5">
    <location>
        <begin position="186"/>
        <end position="197"/>
    </location>
</feature>
<feature type="compositionally biased region" description="Low complexity" evidence="5">
    <location>
        <begin position="198"/>
        <end position="214"/>
    </location>
</feature>
<feature type="compositionally biased region" description="Polar residues" evidence="5">
    <location>
        <begin position="234"/>
        <end position="249"/>
    </location>
</feature>
<feature type="binding site" evidence="1">
    <location>
        <position position="65"/>
    </location>
    <ligand>
        <name>Zn(2+)</name>
        <dbReference type="ChEBI" id="CHEBI:29105"/>
    </ligand>
</feature>
<feature type="binding site" evidence="1">
    <location>
        <position position="110"/>
    </location>
    <ligand>
        <name>Zn(2+)</name>
        <dbReference type="ChEBI" id="CHEBI:29105"/>
    </ligand>
</feature>
<feature type="binding site" evidence="1">
    <location>
        <position position="122"/>
    </location>
    <ligand>
        <name>Zn(2+)</name>
        <dbReference type="ChEBI" id="CHEBI:29105"/>
    </ligand>
</feature>
<feature type="binding site" evidence="1">
    <location>
        <position position="127"/>
    </location>
    <ligand>
        <name>Zn(2+)</name>
        <dbReference type="ChEBI" id="CHEBI:29105"/>
    </ligand>
</feature>
<feature type="modified residue" description="N-acetylthreonine" evidence="2">
    <location>
        <position position="2"/>
    </location>
</feature>
<feature type="modified residue" description="Phosphoserine" evidence="2 4">
    <location>
        <position position="463"/>
    </location>
</feature>
<feature type="modified residue" description="Phosphoserine" evidence="2 4">
    <location>
        <position position="465"/>
    </location>
</feature>
<proteinExistence type="evidence at transcript level"/>
<protein>
    <recommendedName>
        <fullName>Mothers against decapentaplegic homolog 5</fullName>
        <shortName>MAD homolog 5</shortName>
        <shortName>Mothers against DPP homolog 5</shortName>
    </recommendedName>
    <alternativeName>
        <fullName>SMAD family member 5</fullName>
        <shortName>SMAD 5</shortName>
        <shortName>Smad5</shortName>
    </alternativeName>
</protein>